<accession>Q5P7G7</accession>
<protein>
    <recommendedName>
        <fullName evidence="1">Peptide chain release factor 1</fullName>
        <shortName evidence="1">RF-1</shortName>
    </recommendedName>
</protein>
<feature type="chain" id="PRO_0000263233" description="Peptide chain release factor 1">
    <location>
        <begin position="1"/>
        <end position="359"/>
    </location>
</feature>
<feature type="modified residue" description="N5-methylglutamine" evidence="1">
    <location>
        <position position="235"/>
    </location>
</feature>
<reference key="1">
    <citation type="journal article" date="2005" name="Arch. Microbiol.">
        <title>The genome sequence of an anaerobic aromatic-degrading denitrifying bacterium, strain EbN1.</title>
        <authorList>
            <person name="Rabus R."/>
            <person name="Kube M."/>
            <person name="Heider J."/>
            <person name="Beck A."/>
            <person name="Heitmann K."/>
            <person name="Widdel F."/>
            <person name="Reinhardt R."/>
        </authorList>
    </citation>
    <scope>NUCLEOTIDE SEQUENCE [LARGE SCALE GENOMIC DNA]</scope>
    <source>
        <strain>DSM 19018 / LMG 30748 / EbN1</strain>
    </source>
</reference>
<sequence length="359" mass="39688">MKQSIRDKLELLTHRLAELDRELSSGDAVRDMDGFRSLGRERAEIEPVVALYGAYRQAEADCESARAMLADAEMRELAESELETGAVRLQALEAELQCALLPCDPSDERNLFLEVRAGTGGDEASLFAGDLLRMYTRYAERQRWKVEIVSSSPSDLGGYKEVILRIAGAGAYSKLKFESGGHRVQRIPVTETQGRIHTSACTVAVMPEADEVEAVNINPADLRIDTFRASGAGGQHINKTDSAVRITHLPTGIVVECQDDRSQHRNRAQAMSVLAARIQDRQLREQQAREAATRKSLVGSGDRSERIRTYNYPQGRVTDHRINLTLYKLDAVMQGDLDELVDALTREHQADQLAALGGG</sequence>
<keyword id="KW-0963">Cytoplasm</keyword>
<keyword id="KW-0488">Methylation</keyword>
<keyword id="KW-0648">Protein biosynthesis</keyword>
<keyword id="KW-1185">Reference proteome</keyword>
<evidence type="ECO:0000255" key="1">
    <source>
        <dbReference type="HAMAP-Rule" id="MF_00093"/>
    </source>
</evidence>
<proteinExistence type="inferred from homology"/>
<name>RF1_AROAE</name>
<comment type="function">
    <text evidence="1">Peptide chain release factor 1 directs the termination of translation in response to the peptide chain termination codons UAG and UAA.</text>
</comment>
<comment type="subcellular location">
    <subcellularLocation>
        <location evidence="1">Cytoplasm</location>
    </subcellularLocation>
</comment>
<comment type="PTM">
    <text evidence="1">Methylated by PrmC. Methylation increases the termination efficiency of RF1.</text>
</comment>
<comment type="similarity">
    <text evidence="1">Belongs to the prokaryotic/mitochondrial release factor family.</text>
</comment>
<organism>
    <name type="scientific">Aromatoleum aromaticum (strain DSM 19018 / LMG 30748 / EbN1)</name>
    <name type="common">Azoarcus sp. (strain EbN1)</name>
    <dbReference type="NCBI Taxonomy" id="76114"/>
    <lineage>
        <taxon>Bacteria</taxon>
        <taxon>Pseudomonadati</taxon>
        <taxon>Pseudomonadota</taxon>
        <taxon>Betaproteobacteria</taxon>
        <taxon>Rhodocyclales</taxon>
        <taxon>Rhodocyclaceae</taxon>
        <taxon>Aromatoleum</taxon>
    </lineage>
</organism>
<dbReference type="EMBL" id="CR555306">
    <property type="protein sequence ID" value="CAI06744.1"/>
    <property type="molecule type" value="Genomic_DNA"/>
</dbReference>
<dbReference type="RefSeq" id="WP_011236474.1">
    <property type="nucleotide sequence ID" value="NC_006513.1"/>
</dbReference>
<dbReference type="SMR" id="Q5P7G7"/>
<dbReference type="STRING" id="76114.ebA1177"/>
<dbReference type="KEGG" id="eba:ebA1177"/>
<dbReference type="eggNOG" id="COG0216">
    <property type="taxonomic scope" value="Bacteria"/>
</dbReference>
<dbReference type="HOGENOM" id="CLU_036856_0_1_4"/>
<dbReference type="OrthoDB" id="9806673at2"/>
<dbReference type="Proteomes" id="UP000006552">
    <property type="component" value="Chromosome"/>
</dbReference>
<dbReference type="GO" id="GO:0005737">
    <property type="term" value="C:cytoplasm"/>
    <property type="evidence" value="ECO:0007669"/>
    <property type="project" value="UniProtKB-SubCell"/>
</dbReference>
<dbReference type="GO" id="GO:0016149">
    <property type="term" value="F:translation release factor activity, codon specific"/>
    <property type="evidence" value="ECO:0007669"/>
    <property type="project" value="UniProtKB-UniRule"/>
</dbReference>
<dbReference type="FunFam" id="3.30.160.20:FF:000004">
    <property type="entry name" value="Peptide chain release factor 1"/>
    <property type="match status" value="1"/>
</dbReference>
<dbReference type="FunFam" id="3.30.70.1660:FF:000002">
    <property type="entry name" value="Peptide chain release factor 1"/>
    <property type="match status" value="1"/>
</dbReference>
<dbReference type="FunFam" id="3.30.70.1660:FF:000004">
    <property type="entry name" value="Peptide chain release factor 1"/>
    <property type="match status" value="1"/>
</dbReference>
<dbReference type="Gene3D" id="3.30.160.20">
    <property type="match status" value="1"/>
</dbReference>
<dbReference type="Gene3D" id="3.30.70.1660">
    <property type="match status" value="2"/>
</dbReference>
<dbReference type="Gene3D" id="6.10.140.1950">
    <property type="match status" value="1"/>
</dbReference>
<dbReference type="HAMAP" id="MF_00093">
    <property type="entry name" value="Rel_fac_1"/>
    <property type="match status" value="1"/>
</dbReference>
<dbReference type="InterPro" id="IPR005139">
    <property type="entry name" value="PCRF"/>
</dbReference>
<dbReference type="InterPro" id="IPR000352">
    <property type="entry name" value="Pep_chain_release_fac_I"/>
</dbReference>
<dbReference type="InterPro" id="IPR045853">
    <property type="entry name" value="Pep_chain_release_fac_I_sf"/>
</dbReference>
<dbReference type="InterPro" id="IPR050057">
    <property type="entry name" value="Prokaryotic/Mito_RF"/>
</dbReference>
<dbReference type="InterPro" id="IPR004373">
    <property type="entry name" value="RF-1"/>
</dbReference>
<dbReference type="NCBIfam" id="TIGR00019">
    <property type="entry name" value="prfA"/>
    <property type="match status" value="1"/>
</dbReference>
<dbReference type="NCBIfam" id="NF001859">
    <property type="entry name" value="PRK00591.1"/>
    <property type="match status" value="1"/>
</dbReference>
<dbReference type="PANTHER" id="PTHR43804">
    <property type="entry name" value="LD18447P"/>
    <property type="match status" value="1"/>
</dbReference>
<dbReference type="PANTHER" id="PTHR43804:SF7">
    <property type="entry name" value="LD18447P"/>
    <property type="match status" value="1"/>
</dbReference>
<dbReference type="Pfam" id="PF03462">
    <property type="entry name" value="PCRF"/>
    <property type="match status" value="1"/>
</dbReference>
<dbReference type="Pfam" id="PF00472">
    <property type="entry name" value="RF-1"/>
    <property type="match status" value="1"/>
</dbReference>
<dbReference type="SMART" id="SM00937">
    <property type="entry name" value="PCRF"/>
    <property type="match status" value="1"/>
</dbReference>
<dbReference type="SUPFAM" id="SSF75620">
    <property type="entry name" value="Release factor"/>
    <property type="match status" value="1"/>
</dbReference>
<dbReference type="PROSITE" id="PS00745">
    <property type="entry name" value="RF_PROK_I"/>
    <property type="match status" value="1"/>
</dbReference>
<gene>
    <name evidence="1" type="primary">prfA</name>
    <name type="ordered locus">AZOSEA06220</name>
    <name type="ORF">ebA1177</name>
</gene>